<feature type="signal peptide" evidence="3">
    <location>
        <begin position="1"/>
        <end position="33"/>
    </location>
</feature>
<feature type="chain" id="PRO_0000012941" description="Metabotropic glutamate receptor 8">
    <location>
        <begin position="34"/>
        <end position="908"/>
    </location>
</feature>
<feature type="topological domain" description="Extracellular" evidence="3">
    <location>
        <begin position="34"/>
        <end position="583"/>
    </location>
</feature>
<feature type="transmembrane region" description="Helical; Name=1" evidence="3">
    <location>
        <begin position="584"/>
        <end position="608"/>
    </location>
</feature>
<feature type="topological domain" description="Cytoplasmic" evidence="3">
    <location>
        <begin position="609"/>
        <end position="620"/>
    </location>
</feature>
<feature type="transmembrane region" description="Helical; Name=2" evidence="3">
    <location>
        <begin position="621"/>
        <end position="641"/>
    </location>
</feature>
<feature type="topological domain" description="Extracellular" evidence="3">
    <location>
        <begin position="642"/>
        <end position="647"/>
    </location>
</feature>
<feature type="transmembrane region" description="Helical; Name=3" evidence="3">
    <location>
        <begin position="648"/>
        <end position="668"/>
    </location>
</feature>
<feature type="topological domain" description="Cytoplasmic" evidence="3">
    <location>
        <begin position="669"/>
        <end position="695"/>
    </location>
</feature>
<feature type="transmembrane region" description="Helical; Name=4" evidence="3">
    <location>
        <begin position="696"/>
        <end position="716"/>
    </location>
</feature>
<feature type="topological domain" description="Extracellular" evidence="3">
    <location>
        <begin position="717"/>
        <end position="746"/>
    </location>
</feature>
<feature type="transmembrane region" description="Helical; Name=5" evidence="3">
    <location>
        <begin position="747"/>
        <end position="768"/>
    </location>
</feature>
<feature type="topological domain" description="Cytoplasmic" evidence="3">
    <location>
        <begin position="769"/>
        <end position="781"/>
    </location>
</feature>
<feature type="transmembrane region" description="Helical; Name=6" evidence="3">
    <location>
        <begin position="782"/>
        <end position="803"/>
    </location>
</feature>
<feature type="topological domain" description="Extracellular" evidence="3">
    <location>
        <begin position="804"/>
        <end position="818"/>
    </location>
</feature>
<feature type="transmembrane region" description="Helical; Name=7" evidence="3">
    <location>
        <begin position="819"/>
        <end position="843"/>
    </location>
</feature>
<feature type="topological domain" description="Cytoplasmic" evidence="3">
    <location>
        <begin position="844"/>
        <end position="908"/>
    </location>
</feature>
<feature type="binding site" evidence="1">
    <location>
        <position position="156"/>
    </location>
    <ligand>
        <name>L-glutamate</name>
        <dbReference type="ChEBI" id="CHEBI:29985"/>
    </ligand>
</feature>
<feature type="binding site" evidence="1">
    <location>
        <begin position="177"/>
        <end position="179"/>
    </location>
    <ligand>
        <name>L-glutamate</name>
        <dbReference type="ChEBI" id="CHEBI:29985"/>
    </ligand>
</feature>
<feature type="binding site" evidence="1">
    <location>
        <position position="227"/>
    </location>
    <ligand>
        <name>L-glutamate</name>
        <dbReference type="ChEBI" id="CHEBI:29985"/>
    </ligand>
</feature>
<feature type="binding site" evidence="1">
    <location>
        <position position="309"/>
    </location>
    <ligand>
        <name>L-glutamate</name>
        <dbReference type="ChEBI" id="CHEBI:29985"/>
    </ligand>
</feature>
<feature type="binding site" evidence="1">
    <location>
        <position position="401"/>
    </location>
    <ligand>
        <name>L-glutamate</name>
        <dbReference type="ChEBI" id="CHEBI:29985"/>
    </ligand>
</feature>
<feature type="glycosylation site" description="N-linked (GlcNAc...) asparagine" evidence="3">
    <location>
        <position position="95"/>
    </location>
</feature>
<feature type="glycosylation site" description="N-linked (GlcNAc...) asparagine" evidence="3">
    <location>
        <position position="298"/>
    </location>
</feature>
<feature type="glycosylation site" description="N-linked (GlcNAc...) asparagine" evidence="3">
    <location>
        <position position="452"/>
    </location>
</feature>
<feature type="glycosylation site" description="N-linked (GlcNAc...) asparagine" evidence="3">
    <location>
        <position position="480"/>
    </location>
</feature>
<feature type="glycosylation site" description="N-linked (GlcNAc...) asparagine" evidence="3">
    <location>
        <position position="565"/>
    </location>
</feature>
<feature type="disulfide bond" evidence="1">
    <location>
        <begin position="64"/>
        <end position="106"/>
    </location>
</feature>
<feature type="disulfide bond" evidence="1">
    <location>
        <begin position="246"/>
        <end position="534"/>
    </location>
</feature>
<feature type="disulfide bond" evidence="1">
    <location>
        <begin position="369"/>
        <end position="384"/>
    </location>
</feature>
<feature type="disulfide bond" evidence="1">
    <location>
        <begin position="424"/>
        <end position="431"/>
    </location>
</feature>
<feature type="disulfide bond" evidence="1">
    <location>
        <begin position="516"/>
        <end position="535"/>
    </location>
</feature>
<feature type="disulfide bond" evidence="1">
    <location>
        <begin position="520"/>
        <end position="538"/>
    </location>
</feature>
<feature type="disulfide bond" evidence="1">
    <location>
        <begin position="541"/>
        <end position="553"/>
    </location>
</feature>
<feature type="disulfide bond" evidence="1">
    <location>
        <begin position="556"/>
        <end position="569"/>
    </location>
</feature>
<feature type="cross-link" description="Glycyl lysine isopeptide (Lys-Gly) (interchain with G-Cter in SUMO1)" evidence="2">
    <location>
        <position position="882"/>
    </location>
</feature>
<feature type="splice variant" id="VSP_002033" description="In isoform C." evidence="7">
    <original>SAGTPVTFNENGDAPGRYDIFQYQITNKSTEYKVIGHWTNQLHLKVED</original>
    <variation>CRRGIQMSLPWPTLFTPSFSSSWAVLALLSLLMKTEMLLDVMISSSIK</variation>
    <location>
        <begin position="454"/>
        <end position="501"/>
    </location>
</feature>
<feature type="splice variant" id="VSP_002034" description="In isoform C." evidence="7">
    <location>
        <begin position="502"/>
        <end position="908"/>
    </location>
</feature>
<feature type="splice variant" id="VSP_002032" description="In isoform B." evidence="7 8">
    <original>TSSTKTTYISYSNHSI</original>
    <variation>SKSSVEFPMVKSGSTS</variation>
    <location>
        <begin position="893"/>
        <end position="908"/>
    </location>
</feature>
<feature type="sequence variant" id="VAR_014446" description="In dbSNP:rs769194." evidence="6">
    <original>S</original>
    <variation>C</variation>
    <location>
        <position position="10"/>
    </location>
</feature>
<feature type="sequence variant" id="VAR_014447" description="In dbSNP:rs769202.">
    <original>F</original>
    <variation>C</variation>
    <location>
        <position position="21"/>
    </location>
</feature>
<feature type="sequence variant" id="VAR_049278" description="In dbSNP:rs17150343." evidence="6">
    <original>I</original>
    <variation>T</variation>
    <location>
        <position position="265"/>
    </location>
</feature>
<feature type="sequence variant" id="VAR_054752" description="In dbSNP:rs13309334." evidence="4">
    <original>R</original>
    <variation>Q</variation>
    <location>
        <position position="343"/>
    </location>
</feature>
<feature type="sequence variant" id="VAR_054477" description="In dbSNP:rs78124913." evidence="6">
    <original>F</original>
    <variation>Y</variation>
    <location>
        <position position="362"/>
    </location>
</feature>
<feature type="sequence variant" id="VAR_054478" description="In dbSNP:rs78947184." evidence="6">
    <original>G</original>
    <variation>D</variation>
    <location>
        <position position="368"/>
    </location>
</feature>
<feature type="sequence variant" id="VAR_014448" description="In dbSNP:rs2234947.">
    <original>R</original>
    <variation>Q</variation>
    <location>
        <position position="392"/>
    </location>
</feature>
<feature type="sequence variant" id="VAR_054479" description="In dbSNP:rs75863532." evidence="6">
    <original>L</original>
    <variation>F</variation>
    <location>
        <position position="430"/>
    </location>
</feature>
<feature type="sequence variant" id="VAR_014449" description="In dbSNP:rs2234948.">
    <original>V</original>
    <variation>G</variation>
    <location>
        <position position="548"/>
    </location>
</feature>
<feature type="sequence variant" id="VAR_054753" description="In dbSNP:rs1051433." evidence="5">
    <original>I</original>
    <variation>N</variation>
    <location>
        <position position="768"/>
    </location>
</feature>
<feature type="sequence variant" id="VAR_054754" description="In dbSNP:rs10225567.">
    <original>S</original>
    <variation>I</variation>
    <location>
        <position position="902"/>
    </location>
</feature>
<feature type="sequence conflict" description="In Ref. 1; AAB72040." evidence="9" ref="1">
    <original>R</original>
    <variation>A</variation>
    <location>
        <position position="194"/>
    </location>
</feature>
<feature type="sequence conflict" description="In Ref. 1; AAB72040." evidence="9" ref="1">
    <original>T</original>
    <variation>I</variation>
    <location>
        <position position="460"/>
    </location>
</feature>
<feature type="sequence conflict" description="In Ref. 5; ABY87924." evidence="9" ref="5">
    <original>A</original>
    <variation>V</variation>
    <location>
        <position position="591"/>
    </location>
</feature>
<feature type="sequence conflict" description="In Ref. 1; AAB72040." evidence="9" ref="1">
    <original>A</original>
    <variation>G</variation>
    <location>
        <position position="642"/>
    </location>
</feature>
<feature type="sequence conflict" description="In Ref. 1; AAB72040." evidence="9" ref="1">
    <original>S</original>
    <variation>T</variation>
    <location>
        <position position="904"/>
    </location>
</feature>
<feature type="strand" evidence="10">
    <location>
        <begin position="39"/>
        <end position="42"/>
    </location>
</feature>
<feature type="strand" evidence="10">
    <location>
        <begin position="45"/>
        <end position="52"/>
    </location>
</feature>
<feature type="strand" evidence="10">
    <location>
        <begin position="55"/>
        <end position="57"/>
    </location>
</feature>
<feature type="strand" evidence="10">
    <location>
        <begin position="63"/>
        <end position="67"/>
    </location>
</feature>
<feature type="turn" evidence="10">
    <location>
        <begin position="69"/>
        <end position="72"/>
    </location>
</feature>
<feature type="helix" evidence="10">
    <location>
        <begin position="73"/>
        <end position="88"/>
    </location>
</feature>
<feature type="turn" evidence="10">
    <location>
        <begin position="92"/>
        <end position="95"/>
    </location>
</feature>
<feature type="strand" evidence="10">
    <location>
        <begin position="98"/>
        <end position="104"/>
    </location>
</feature>
<feature type="helix" evidence="10">
    <location>
        <begin position="109"/>
        <end position="116"/>
    </location>
</feature>
<feature type="helix" evidence="10">
    <location>
        <begin position="117"/>
        <end position="119"/>
    </location>
</feature>
<feature type="strand" evidence="10">
    <location>
        <begin position="147"/>
        <end position="151"/>
    </location>
</feature>
<feature type="helix" evidence="10">
    <location>
        <begin position="156"/>
        <end position="166"/>
    </location>
</feature>
<feature type="turn" evidence="10">
    <location>
        <begin position="167"/>
        <end position="170"/>
    </location>
</feature>
<feature type="strand" evidence="10">
    <location>
        <begin position="173"/>
        <end position="177"/>
    </location>
</feature>
<feature type="helix" evidence="10">
    <location>
        <begin position="181"/>
        <end position="184"/>
    </location>
</feature>
<feature type="turn" evidence="10">
    <location>
        <begin position="186"/>
        <end position="188"/>
    </location>
</feature>
<feature type="strand" evidence="10">
    <location>
        <begin position="192"/>
        <end position="196"/>
    </location>
</feature>
<feature type="helix" evidence="10">
    <location>
        <begin position="199"/>
        <end position="213"/>
    </location>
</feature>
<feature type="strand" evidence="10">
    <location>
        <begin position="217"/>
        <end position="225"/>
    </location>
</feature>
<feature type="helix" evidence="10">
    <location>
        <begin position="226"/>
        <end position="241"/>
    </location>
</feature>
<feature type="strand" evidence="10">
    <location>
        <begin position="242"/>
        <end position="244"/>
    </location>
</feature>
<feature type="strand" evidence="10">
    <location>
        <begin position="246"/>
        <end position="253"/>
    </location>
</feature>
<feature type="helix" evidence="10">
    <location>
        <begin position="261"/>
        <end position="269"/>
    </location>
</feature>
<feature type="strand" evidence="10">
    <location>
        <begin position="277"/>
        <end position="281"/>
    </location>
</feature>
<feature type="helix" evidence="10">
    <location>
        <begin position="284"/>
        <end position="296"/>
    </location>
</feature>
<feature type="turn" evidence="10">
    <location>
        <begin position="300"/>
        <end position="302"/>
    </location>
</feature>
<feature type="strand" evidence="10">
    <location>
        <begin position="304"/>
        <end position="307"/>
    </location>
</feature>
<feature type="turn" evidence="10">
    <location>
        <begin position="309"/>
        <end position="313"/>
    </location>
</feature>
<feature type="turn" evidence="10">
    <location>
        <begin position="316"/>
        <end position="320"/>
    </location>
</feature>
<feature type="turn" evidence="10">
    <location>
        <begin position="322"/>
        <end position="327"/>
    </location>
</feature>
<feature type="strand" evidence="10">
    <location>
        <begin position="329"/>
        <end position="334"/>
    </location>
</feature>
<feature type="helix" evidence="10">
    <location>
        <begin position="339"/>
        <end position="346"/>
    </location>
</feature>
<feature type="turn" evidence="10">
    <location>
        <begin position="350"/>
        <end position="352"/>
    </location>
</feature>
<feature type="helix" evidence="10">
    <location>
        <begin position="359"/>
        <end position="367"/>
    </location>
</feature>
<feature type="turn" evidence="10">
    <location>
        <begin position="390"/>
        <end position="392"/>
    </location>
</feature>
<feature type="helix" evidence="10">
    <location>
        <begin position="402"/>
        <end position="423"/>
    </location>
</feature>
<feature type="strand" evidence="10">
    <location>
        <begin position="424"/>
        <end position="426"/>
    </location>
</feature>
<feature type="helix" evidence="10">
    <location>
        <begin position="432"/>
        <end position="434"/>
    </location>
</feature>
<feature type="helix" evidence="10">
    <location>
        <begin position="439"/>
        <end position="448"/>
    </location>
</feature>
<feature type="strand" evidence="11">
    <location>
        <begin position="450"/>
        <end position="452"/>
    </location>
</feature>
<feature type="turn" evidence="12">
    <location>
        <begin position="454"/>
        <end position="456"/>
    </location>
</feature>
<feature type="strand" evidence="11">
    <location>
        <begin position="458"/>
        <end position="460"/>
    </location>
</feature>
<feature type="strand" evidence="11">
    <location>
        <begin position="463"/>
        <end position="465"/>
    </location>
</feature>
<feature type="strand" evidence="10">
    <location>
        <begin position="470"/>
        <end position="478"/>
    </location>
</feature>
<feature type="strand" evidence="10">
    <location>
        <begin position="483"/>
        <end position="497"/>
    </location>
</feature>
<feature type="helix" evidence="10">
    <location>
        <begin position="499"/>
        <end position="501"/>
    </location>
</feature>
<proteinExistence type="evidence at protein level"/>
<evidence type="ECO:0000250" key="1"/>
<evidence type="ECO:0000250" key="2">
    <source>
        <dbReference type="UniProtKB" id="P47743"/>
    </source>
</evidence>
<evidence type="ECO:0000255" key="3"/>
<evidence type="ECO:0000269" key="4">
    <source>
    </source>
</evidence>
<evidence type="ECO:0000269" key="5">
    <source>
    </source>
</evidence>
<evidence type="ECO:0000269" key="6">
    <source ref="6"/>
</evidence>
<evidence type="ECO:0000303" key="7">
    <source>
    </source>
</evidence>
<evidence type="ECO:0000303" key="8">
    <source ref="4"/>
</evidence>
<evidence type="ECO:0000305" key="9"/>
<evidence type="ECO:0007829" key="10">
    <source>
        <dbReference type="PDB" id="6BSZ"/>
    </source>
</evidence>
<evidence type="ECO:0007829" key="11">
    <source>
        <dbReference type="PDB" id="6BT5"/>
    </source>
</evidence>
<evidence type="ECO:0007829" key="12">
    <source>
        <dbReference type="PDB" id="6E5V"/>
    </source>
</evidence>
<organism>
    <name type="scientific">Homo sapiens</name>
    <name type="common">Human</name>
    <dbReference type="NCBI Taxonomy" id="9606"/>
    <lineage>
        <taxon>Eukaryota</taxon>
        <taxon>Metazoa</taxon>
        <taxon>Chordata</taxon>
        <taxon>Craniata</taxon>
        <taxon>Vertebrata</taxon>
        <taxon>Euteleostomi</taxon>
        <taxon>Mammalia</taxon>
        <taxon>Eutheria</taxon>
        <taxon>Euarchontoglires</taxon>
        <taxon>Primates</taxon>
        <taxon>Haplorrhini</taxon>
        <taxon>Catarrhini</taxon>
        <taxon>Hominidae</taxon>
        <taxon>Homo</taxon>
    </lineage>
</organism>
<dbReference type="EMBL" id="U95025">
    <property type="protein sequence ID" value="AAB72040.1"/>
    <property type="molecule type" value="mRNA"/>
</dbReference>
<dbReference type="EMBL" id="U92459">
    <property type="protein sequence ID" value="AAB51764.1"/>
    <property type="molecule type" value="mRNA"/>
</dbReference>
<dbReference type="EMBL" id="AJ236921">
    <property type="protein sequence ID" value="CAB36968.1"/>
    <property type="molecule type" value="mRNA"/>
</dbReference>
<dbReference type="EMBL" id="AJ236922">
    <property type="protein sequence ID" value="CAB36969.1"/>
    <property type="molecule type" value="mRNA"/>
</dbReference>
<dbReference type="EMBL" id="AY608335">
    <property type="protein sequence ID" value="AAT37959.1"/>
    <property type="molecule type" value="mRNA"/>
</dbReference>
<dbReference type="EMBL" id="EU432125">
    <property type="protein sequence ID" value="ABY87924.1"/>
    <property type="molecule type" value="mRNA"/>
</dbReference>
<dbReference type="EMBL" id="EU368948">
    <property type="protein sequence ID" value="ABY59657.1"/>
    <property type="molecule type" value="Genomic_DNA"/>
</dbReference>
<dbReference type="EMBL" id="CH236947">
    <property type="protein sequence ID" value="EAL24322.1"/>
    <property type="molecule type" value="Genomic_DNA"/>
</dbReference>
<dbReference type="EMBL" id="BC093725">
    <property type="protein sequence ID" value="AAH93725.1"/>
    <property type="molecule type" value="mRNA"/>
</dbReference>
<dbReference type="EMBL" id="BC101675">
    <property type="protein sequence ID" value="AAI01676.1"/>
    <property type="molecule type" value="mRNA"/>
</dbReference>
<dbReference type="CCDS" id="CCDS47696.1">
    <molecule id="O00222-2"/>
</dbReference>
<dbReference type="CCDS" id="CCDS5794.1">
    <molecule id="O00222-1"/>
</dbReference>
<dbReference type="RefSeq" id="NP_000836.2">
    <molecule id="O00222-1"/>
    <property type="nucleotide sequence ID" value="NM_000845.3"/>
</dbReference>
<dbReference type="RefSeq" id="NP_001120795.1">
    <molecule id="O00222-2"/>
    <property type="nucleotide sequence ID" value="NM_001127323.1"/>
</dbReference>
<dbReference type="RefSeq" id="NP_001358012.1">
    <molecule id="O00222-1"/>
    <property type="nucleotide sequence ID" value="NM_001371083.1"/>
</dbReference>
<dbReference type="RefSeq" id="NP_001358013.1">
    <molecule id="O00222-1"/>
    <property type="nucleotide sequence ID" value="NM_001371084.1"/>
</dbReference>
<dbReference type="RefSeq" id="NP_001358014.1">
    <molecule id="O00222-2"/>
    <property type="nucleotide sequence ID" value="NM_001371085.1"/>
</dbReference>
<dbReference type="RefSeq" id="XP_006716001.1">
    <property type="nucleotide sequence ID" value="XM_006715938.3"/>
</dbReference>
<dbReference type="RefSeq" id="XP_011514393.1">
    <property type="nucleotide sequence ID" value="XM_011516091.1"/>
</dbReference>
<dbReference type="RefSeq" id="XP_011514394.1">
    <property type="nucleotide sequence ID" value="XM_011516092.2"/>
</dbReference>
<dbReference type="RefSeq" id="XP_016867563.1">
    <property type="nucleotide sequence ID" value="XM_017012074.1"/>
</dbReference>
<dbReference type="PDB" id="6BSZ">
    <property type="method" value="X-ray"/>
    <property type="resolution" value="2.65 A"/>
    <property type="chains" value="A/B=37-514"/>
</dbReference>
<dbReference type="PDB" id="6BT5">
    <property type="method" value="X-ray"/>
    <property type="resolution" value="2.92 A"/>
    <property type="chains" value="A/B=37-514"/>
</dbReference>
<dbReference type="PDB" id="6E5V">
    <property type="method" value="X-ray"/>
    <property type="resolution" value="2.95 A"/>
    <property type="chains" value="A/B=2-508"/>
</dbReference>
<dbReference type="PDBsum" id="6BSZ"/>
<dbReference type="PDBsum" id="6BT5"/>
<dbReference type="PDBsum" id="6E5V"/>
<dbReference type="SMR" id="O00222"/>
<dbReference type="BioGRID" id="109175">
    <property type="interactions" value="1"/>
</dbReference>
<dbReference type="CORUM" id="O00222"/>
<dbReference type="FunCoup" id="O00222">
    <property type="interactions" value="1149"/>
</dbReference>
<dbReference type="IntAct" id="O00222">
    <property type="interactions" value="1"/>
</dbReference>
<dbReference type="STRING" id="9606.ENSP00000351142"/>
<dbReference type="BindingDB" id="O00222"/>
<dbReference type="ChEMBL" id="CHEMBL3228"/>
<dbReference type="DrugBank" id="DB00142">
    <property type="generic name" value="Glutamic acid"/>
</dbReference>
<dbReference type="DrugCentral" id="O00222"/>
<dbReference type="GuidetoPHARMACOLOGY" id="296"/>
<dbReference type="GlyCosmos" id="O00222">
    <property type="glycosylation" value="5 sites, No reported glycans"/>
</dbReference>
<dbReference type="GlyGen" id="O00222">
    <property type="glycosylation" value="5 sites"/>
</dbReference>
<dbReference type="iPTMnet" id="O00222"/>
<dbReference type="PhosphoSitePlus" id="O00222"/>
<dbReference type="BioMuta" id="GRM8"/>
<dbReference type="MassIVE" id="O00222"/>
<dbReference type="PaxDb" id="9606-ENSP00000344173"/>
<dbReference type="PeptideAtlas" id="O00222"/>
<dbReference type="ProteomicsDB" id="47793">
    <molecule id="O00222-2"/>
</dbReference>
<dbReference type="Antibodypedia" id="17706">
    <property type="antibodies" value="371 antibodies from 34 providers"/>
</dbReference>
<dbReference type="DNASU" id="2918"/>
<dbReference type="Ensembl" id="ENST00000339582.7">
    <molecule id="O00222-1"/>
    <property type="protein sequence ID" value="ENSP00000344173.2"/>
    <property type="gene ID" value="ENSG00000179603.19"/>
</dbReference>
<dbReference type="Ensembl" id="ENST00000341617.7">
    <molecule id="O00222-3"/>
    <property type="protein sequence ID" value="ENSP00000345747.3"/>
    <property type="gene ID" value="ENSG00000179603.19"/>
</dbReference>
<dbReference type="Ensembl" id="ENST00000358373.8">
    <molecule id="O00222-2"/>
    <property type="protein sequence ID" value="ENSP00000351142.3"/>
    <property type="gene ID" value="ENSG00000179603.19"/>
</dbReference>
<dbReference type="Ensembl" id="ENST00000472701.5">
    <molecule id="O00222-2"/>
    <property type="protein sequence ID" value="ENSP00000419832.1"/>
    <property type="gene ID" value="ENSG00000179603.19"/>
</dbReference>
<dbReference type="Ensembl" id="ENST00000706916.1">
    <molecule id="O00222-2"/>
    <property type="protein sequence ID" value="ENSP00000516624.1"/>
    <property type="gene ID" value="ENSG00000179603.19"/>
</dbReference>
<dbReference type="Ensembl" id="ENST00000706917.1">
    <molecule id="O00222-1"/>
    <property type="protein sequence ID" value="ENSP00000516625.1"/>
    <property type="gene ID" value="ENSG00000179603.19"/>
</dbReference>
<dbReference type="GeneID" id="2918"/>
<dbReference type="KEGG" id="hsa:2918"/>
<dbReference type="MANE-Select" id="ENST00000339582.7">
    <property type="protein sequence ID" value="ENSP00000344173.2"/>
    <property type="RefSeq nucleotide sequence ID" value="NM_000845.3"/>
    <property type="RefSeq protein sequence ID" value="NP_000836.2"/>
</dbReference>
<dbReference type="UCSC" id="uc003vlr.3">
    <molecule id="O00222-1"/>
    <property type="organism name" value="human"/>
</dbReference>
<dbReference type="AGR" id="HGNC:4600"/>
<dbReference type="CTD" id="2918"/>
<dbReference type="DisGeNET" id="2918"/>
<dbReference type="GeneCards" id="GRM8"/>
<dbReference type="HGNC" id="HGNC:4600">
    <property type="gene designation" value="GRM8"/>
</dbReference>
<dbReference type="HPA" id="ENSG00000179603">
    <property type="expression patterns" value="Tissue enriched (choroid)"/>
</dbReference>
<dbReference type="MalaCards" id="GRM8"/>
<dbReference type="MIM" id="601116">
    <property type="type" value="gene"/>
</dbReference>
<dbReference type="neXtProt" id="NX_O00222"/>
<dbReference type="OpenTargets" id="ENSG00000179603"/>
<dbReference type="PharmGKB" id="PA28997"/>
<dbReference type="VEuPathDB" id="HostDB:ENSG00000179603"/>
<dbReference type="eggNOG" id="KOG1056">
    <property type="taxonomic scope" value="Eukaryota"/>
</dbReference>
<dbReference type="GeneTree" id="ENSGT01030000234648"/>
<dbReference type="HOGENOM" id="CLU_005389_0_0_1"/>
<dbReference type="InParanoid" id="O00222"/>
<dbReference type="OMA" id="AYALNNM"/>
<dbReference type="OrthoDB" id="425344at2759"/>
<dbReference type="PAN-GO" id="O00222">
    <property type="GO annotations" value="4 GO annotations based on evolutionary models"/>
</dbReference>
<dbReference type="PhylomeDB" id="O00222"/>
<dbReference type="TreeFam" id="TF313240"/>
<dbReference type="PathwayCommons" id="O00222"/>
<dbReference type="Reactome" id="R-HSA-418594">
    <property type="pathway name" value="G alpha (i) signalling events"/>
</dbReference>
<dbReference type="Reactome" id="R-HSA-420499">
    <property type="pathway name" value="Class C/3 (Metabotropic glutamate/pheromone receptors)"/>
</dbReference>
<dbReference type="SignaLink" id="O00222"/>
<dbReference type="SIGNOR" id="O00222"/>
<dbReference type="BioGRID-ORCS" id="2918">
    <property type="hits" value="13 hits in 1145 CRISPR screens"/>
</dbReference>
<dbReference type="ChiTaRS" id="GRM8">
    <property type="organism name" value="human"/>
</dbReference>
<dbReference type="GeneWiki" id="Metabotropic_glutamate_receptor_8"/>
<dbReference type="GenomeRNAi" id="2918"/>
<dbReference type="Pharos" id="O00222">
    <property type="development level" value="Tchem"/>
</dbReference>
<dbReference type="PRO" id="PR:O00222"/>
<dbReference type="Proteomes" id="UP000005640">
    <property type="component" value="Chromosome 7"/>
</dbReference>
<dbReference type="RNAct" id="O00222">
    <property type="molecule type" value="protein"/>
</dbReference>
<dbReference type="Bgee" id="ENSG00000179603">
    <property type="expression patterns" value="Expressed in primordial germ cell in gonad and 137 other cell types or tissues"/>
</dbReference>
<dbReference type="ExpressionAtlas" id="O00222">
    <property type="expression patterns" value="baseline and differential"/>
</dbReference>
<dbReference type="GO" id="GO:0005886">
    <property type="term" value="C:plasma membrane"/>
    <property type="evidence" value="ECO:0000318"/>
    <property type="project" value="GO_Central"/>
</dbReference>
<dbReference type="GO" id="GO:0004930">
    <property type="term" value="F:G protein-coupled receptor activity"/>
    <property type="evidence" value="ECO:0000315"/>
    <property type="project" value="UniProtKB"/>
</dbReference>
<dbReference type="GO" id="GO:0008066">
    <property type="term" value="F:glutamate receptor activity"/>
    <property type="evidence" value="ECO:0000315"/>
    <property type="project" value="UniProtKB"/>
</dbReference>
<dbReference type="GO" id="GO:0001642">
    <property type="term" value="F:group III metabotropic glutamate receptor activity"/>
    <property type="evidence" value="ECO:0000318"/>
    <property type="project" value="GO_Central"/>
</dbReference>
<dbReference type="GO" id="GO:0007196">
    <property type="term" value="P:adenylate cyclase-inhibiting G protein-coupled glutamate receptor signaling pathway"/>
    <property type="evidence" value="ECO:0000315"/>
    <property type="project" value="UniProtKB"/>
</dbReference>
<dbReference type="GO" id="GO:0007193">
    <property type="term" value="P:adenylate cyclase-inhibiting G protein-coupled receptor signaling pathway"/>
    <property type="evidence" value="ECO:0000314"/>
    <property type="project" value="UniProtKB"/>
</dbReference>
<dbReference type="GO" id="GO:0007216">
    <property type="term" value="P:G protein-coupled glutamate receptor signaling pathway"/>
    <property type="evidence" value="ECO:0000318"/>
    <property type="project" value="GO_Central"/>
</dbReference>
<dbReference type="GO" id="GO:0051966">
    <property type="term" value="P:regulation of synaptic transmission, glutamatergic"/>
    <property type="evidence" value="ECO:0000318"/>
    <property type="project" value="GO_Central"/>
</dbReference>
<dbReference type="GO" id="GO:0007601">
    <property type="term" value="P:visual perception"/>
    <property type="evidence" value="ECO:0000304"/>
    <property type="project" value="ProtInc"/>
</dbReference>
<dbReference type="CDD" id="cd15454">
    <property type="entry name" value="7tmC_mGluR8"/>
    <property type="match status" value="1"/>
</dbReference>
<dbReference type="CDD" id="cd06376">
    <property type="entry name" value="PBP1_mGluR_groupIII"/>
    <property type="match status" value="1"/>
</dbReference>
<dbReference type="FunFam" id="3.40.50.2300:FF:000196">
    <property type="entry name" value="Glutamate metabotropic receptor 7"/>
    <property type="match status" value="1"/>
</dbReference>
<dbReference type="FunFam" id="3.40.50.2300:FF:000009">
    <property type="entry name" value="Glutamate receptor, metabotropic 4"/>
    <property type="match status" value="1"/>
</dbReference>
<dbReference type="FunFam" id="2.10.50.30:FF:000001">
    <property type="entry name" value="metabotropic glutamate receptor 1"/>
    <property type="match status" value="1"/>
</dbReference>
<dbReference type="FunFam" id="3.40.50.2300:FF:000176">
    <property type="entry name" value="metabotropic glutamate receptor 7"/>
    <property type="match status" value="1"/>
</dbReference>
<dbReference type="Gene3D" id="3.40.50.2300">
    <property type="match status" value="2"/>
</dbReference>
<dbReference type="Gene3D" id="2.10.50.30">
    <property type="entry name" value="GPCR, family 3, nine cysteines domain"/>
    <property type="match status" value="1"/>
</dbReference>
<dbReference type="InterPro" id="IPR001828">
    <property type="entry name" value="ANF_lig-bd_rcpt"/>
</dbReference>
<dbReference type="InterPro" id="IPR000337">
    <property type="entry name" value="GPCR_3"/>
</dbReference>
<dbReference type="InterPro" id="IPR011500">
    <property type="entry name" value="GPCR_3_9-Cys_dom"/>
</dbReference>
<dbReference type="InterPro" id="IPR038550">
    <property type="entry name" value="GPCR_3_9-Cys_sf"/>
</dbReference>
<dbReference type="InterPro" id="IPR017978">
    <property type="entry name" value="GPCR_3_C"/>
</dbReference>
<dbReference type="InterPro" id="IPR017979">
    <property type="entry name" value="GPCR_3_CS"/>
</dbReference>
<dbReference type="InterPro" id="IPR000144">
    <property type="entry name" value="GPCR_3_mGluR8"/>
</dbReference>
<dbReference type="InterPro" id="IPR000162">
    <property type="entry name" value="GPCR_3_mtglu_rcpt"/>
</dbReference>
<dbReference type="InterPro" id="IPR050726">
    <property type="entry name" value="mGluR"/>
</dbReference>
<dbReference type="InterPro" id="IPR028082">
    <property type="entry name" value="Peripla_BP_I"/>
</dbReference>
<dbReference type="PANTHER" id="PTHR24060">
    <property type="entry name" value="METABOTROPIC GLUTAMATE RECEPTOR"/>
    <property type="match status" value="1"/>
</dbReference>
<dbReference type="Pfam" id="PF00003">
    <property type="entry name" value="7tm_3"/>
    <property type="match status" value="1"/>
</dbReference>
<dbReference type="Pfam" id="PF01094">
    <property type="entry name" value="ANF_receptor"/>
    <property type="match status" value="1"/>
</dbReference>
<dbReference type="Pfam" id="PF07562">
    <property type="entry name" value="NCD3G"/>
    <property type="match status" value="1"/>
</dbReference>
<dbReference type="PRINTS" id="PR00248">
    <property type="entry name" value="GPCRMGR"/>
</dbReference>
<dbReference type="PRINTS" id="PR01058">
    <property type="entry name" value="MTABOTROPC8R"/>
</dbReference>
<dbReference type="PRINTS" id="PR00593">
    <property type="entry name" value="MTABOTROPICR"/>
</dbReference>
<dbReference type="SUPFAM" id="SSF53822">
    <property type="entry name" value="Periplasmic binding protein-like I"/>
    <property type="match status" value="1"/>
</dbReference>
<dbReference type="PROSITE" id="PS00979">
    <property type="entry name" value="G_PROTEIN_RECEP_F3_1"/>
    <property type="match status" value="1"/>
</dbReference>
<dbReference type="PROSITE" id="PS00980">
    <property type="entry name" value="G_PROTEIN_RECEP_F3_2"/>
    <property type="match status" value="1"/>
</dbReference>
<dbReference type="PROSITE" id="PS00981">
    <property type="entry name" value="G_PROTEIN_RECEP_F3_3"/>
    <property type="match status" value="1"/>
</dbReference>
<dbReference type="PROSITE" id="PS50259">
    <property type="entry name" value="G_PROTEIN_RECEP_F3_4"/>
    <property type="match status" value="1"/>
</dbReference>
<comment type="function">
    <text evidence="5">G-protein coupled receptor for glutamate. Ligand binding causes a conformation change that triggers signaling via guanine nucleotide-binding proteins (G proteins) and modulates the activity of down-stream effectors, such as adenylate cyclase. Signaling inhibits adenylate cyclase activity.</text>
</comment>
<comment type="subunit">
    <text evidence="1">Interacts with PICK1.</text>
</comment>
<comment type="subcellular location">
    <subcellularLocation>
        <location>Cell membrane</location>
        <topology>Multi-pass membrane protein</topology>
    </subcellularLocation>
</comment>
<comment type="alternative products">
    <event type="alternative splicing"/>
    <isoform>
        <id>O00222-1</id>
        <name>A</name>
        <name>mGluR8a</name>
        <sequence type="displayed"/>
    </isoform>
    <isoform>
        <id>O00222-2</id>
        <name>B</name>
        <name>mGluR8b</name>
        <sequence type="described" ref="VSP_002032"/>
    </isoform>
    <isoform>
        <id>O00222-3</id>
        <name>C</name>
        <name>mGluR8c</name>
        <sequence type="described" ref="VSP_002033 VSP_002034"/>
    </isoform>
</comment>
<comment type="similarity">
    <text evidence="9">Belongs to the G-protein coupled receptor 3 family.</text>
</comment>
<keyword id="KW-0002">3D-structure</keyword>
<keyword id="KW-0025">Alternative splicing</keyword>
<keyword id="KW-1003">Cell membrane</keyword>
<keyword id="KW-1015">Disulfide bond</keyword>
<keyword id="KW-0297">G-protein coupled receptor</keyword>
<keyword id="KW-0325">Glycoprotein</keyword>
<keyword id="KW-1017">Isopeptide bond</keyword>
<keyword id="KW-0472">Membrane</keyword>
<keyword id="KW-1267">Proteomics identification</keyword>
<keyword id="KW-0675">Receptor</keyword>
<keyword id="KW-1185">Reference proteome</keyword>
<keyword id="KW-0716">Sensory transduction</keyword>
<keyword id="KW-0732">Signal</keyword>
<keyword id="KW-0807">Transducer</keyword>
<keyword id="KW-0812">Transmembrane</keyword>
<keyword id="KW-1133">Transmembrane helix</keyword>
<keyword id="KW-0832">Ubl conjugation</keyword>
<name>GRM8_HUMAN</name>
<protein>
    <recommendedName>
        <fullName>Metabotropic glutamate receptor 8</fullName>
        <shortName>mGluR8</shortName>
    </recommendedName>
</protein>
<gene>
    <name type="primary">GRM8</name>
    <name type="synonym">GPRC1H</name>
    <name type="synonym">MGLUR8</name>
</gene>
<sequence length="908" mass="101741">MVCEGKRSASCPCFFLLTAKFYWILTMMQRTHSQEYAHSIRVDGDIILGGLFPVHAKGERGVPCGELKKEKGIHRLEAMLYAIDQINKDPDLLSNITLGVRILDTCSRDTYALEQSLTFVQALIEKDASDVKCANGDPPIFTKPDKISGVIGAAASSVSIMVANILRLFKIPQISYASTAPELSDNTRYDFFSRVVPPDSYQAQAMVDIVTALGWNYVSTLASEGNYGESGVEAFTQISREIGGVCIAQSQKIPREPRPGEFEKIIKRLLETPNARAVIMFANEDDIRRILEAAKKLNQSGHFLWIGSDSWGSKIAPVYQQEEIAEGAVTILPKRASIDGFDRYFRSRTLANNRRNVWFAEFWEENFGCKLGSHGKRNSHIKKCTGLERIARDSSYEQEGKVQFVIDAVYSMAYALHNMHKDLCPGYIGLCPRMSTIDGKELLGYIRAVNFNGSAGTPVTFNENGDAPGRYDIFQYQITNKSTEYKVIGHWTNQLHLKVEDMQWAHREHTHPASVCSLPCKPGERKKTVKGVPCCWHCERCEGYNYQVDELSCELCPLDQRPNMNRTGCQLIPIIKLEWHSPWAVVPVFVAILGIIATTFVIVTFVRYNDTPIVRASGRELSYVLLTGIFLCYSITFLMIAAPDTIICSFRRVFLGLGMCFSYAALLTKTNRIHRIFEQGKKSVTAPKFISPASQLVITFSLISVQLLGVFVWFVVDPPHIIIDYGEQRTLDPEKARGVLKCDISDLSLICSLGYSILLMVTCTVYAIKTRGVPETFNEAKPIGFTMYTTCIIWLAFIPIFFGTAQSAEKMYIQTTTLTVSMSLSASVSLGMLYMPKVYIIIFHPEQNVQKRKRSFKAVVTAATMQSKLIQKGNDRPNGEVKSELCESLETNTSSTKTTYISYSNHSI</sequence>
<reference key="1">
    <citation type="journal article" date="1997" name="Genomics">
        <title>The human metabotropic glutamate receptor 8 (GRM8) gene: a disproportionately large gene located at 7q31.3-q32.1.</title>
        <authorList>
            <person name="Scherer S.W."/>
            <person name="Soder S."/>
            <person name="Duvoisin R.M."/>
            <person name="Huizenga J.J."/>
            <person name="Tsui L.-C."/>
        </authorList>
    </citation>
    <scope>NUCLEOTIDE SEQUENCE [MRNA] (ISOFORM A)</scope>
</reference>
<reference key="2">
    <citation type="journal article" date="1998" name="Brain Res. Mol. Brain Res.">
        <title>Group III human metabotropic glutamate receptors 4, 7 and 8: molecular cloning, functional expression, and comparison of pharmacological properties in RGT cells.</title>
        <authorList>
            <person name="Wu S."/>
            <person name="Wright R.A."/>
            <person name="Rockey P.K."/>
            <person name="Burgett S.G."/>
            <person name="Arnold J.S."/>
            <person name="Rosteck P.R. Jr."/>
            <person name="Johnson B.G."/>
            <person name="Schoepp D.D."/>
            <person name="Belagaje R.M."/>
        </authorList>
    </citation>
    <scope>NUCLEOTIDE SEQUENCE [MRNA] (ISOFORM A)</scope>
    <scope>FUNCTION</scope>
    <scope>VARIANT ASN-768</scope>
</reference>
<reference key="3">
    <citation type="journal article" date="1999" name="Brain Res. Mol. Brain Res.">
        <title>Cloning and functional expression of alternative spliced variants of the human metabotropic glutamate receptor 8.</title>
        <authorList>
            <person name="Malherbe P."/>
            <person name="Kratzeisen C."/>
            <person name="Lundstrom K."/>
            <person name="Richards J.G."/>
            <person name="Faull R.L.M."/>
            <person name="Mutel V."/>
        </authorList>
    </citation>
    <scope>NUCLEOTIDE SEQUENCE [MRNA] (ISOFORMS B AND C)</scope>
    <source>
        <tissue>Fetal brain</tissue>
    </source>
</reference>
<reference key="4">
    <citation type="submission" date="2004-04" db="EMBL/GenBank/DDBJ databases">
        <title>Homo sapiens metabotropic glutamate receptor.</title>
        <authorList>
            <person name="Stormann T.M."/>
            <person name="Simin R.T."/>
            <person name="Hammerland L.G."/>
            <person name="Fuller F.H."/>
        </authorList>
    </citation>
    <scope>NUCLEOTIDE SEQUENCE [MRNA] (ISOFORM B)</scope>
</reference>
<reference key="5">
    <citation type="submission" date="2007-12" db="EMBL/GenBank/DDBJ databases">
        <authorList>
            <person name="Kaighin V.A."/>
            <person name="Martin A.L."/>
            <person name="Aronstam R.S."/>
        </authorList>
    </citation>
    <scope>NUCLEOTIDE SEQUENCE [MRNA] (ISOFORM A)</scope>
    <source>
        <tissue>Brain</tissue>
    </source>
</reference>
<reference key="6">
    <citation type="submission" date="2008-01" db="EMBL/GenBank/DDBJ databases">
        <authorList>
            <consortium name="NIEHS SNPs program"/>
        </authorList>
    </citation>
    <scope>NUCLEOTIDE SEQUENCE [GENOMIC DNA]</scope>
    <scope>VARIANTS CYS-10; THR-265; TYR-362; ASP-368 AND PHE-430</scope>
</reference>
<reference key="7">
    <citation type="journal article" date="2003" name="Nature">
        <title>The DNA sequence of human chromosome 7.</title>
        <authorList>
            <person name="Hillier L.W."/>
            <person name="Fulton R.S."/>
            <person name="Fulton L.A."/>
            <person name="Graves T.A."/>
            <person name="Pepin K.H."/>
            <person name="Wagner-McPherson C."/>
            <person name="Layman D."/>
            <person name="Maas J."/>
            <person name="Jaeger S."/>
            <person name="Walker R."/>
            <person name="Wylie K."/>
            <person name="Sekhon M."/>
            <person name="Becker M.C."/>
            <person name="O'Laughlin M.D."/>
            <person name="Schaller M.E."/>
            <person name="Fewell G.A."/>
            <person name="Delehaunty K.D."/>
            <person name="Miner T.L."/>
            <person name="Nash W.E."/>
            <person name="Cordes M."/>
            <person name="Du H."/>
            <person name="Sun H."/>
            <person name="Edwards J."/>
            <person name="Bradshaw-Cordum H."/>
            <person name="Ali J."/>
            <person name="Andrews S."/>
            <person name="Isak A."/>
            <person name="Vanbrunt A."/>
            <person name="Nguyen C."/>
            <person name="Du F."/>
            <person name="Lamar B."/>
            <person name="Courtney L."/>
            <person name="Kalicki J."/>
            <person name="Ozersky P."/>
            <person name="Bielicki L."/>
            <person name="Scott K."/>
            <person name="Holmes A."/>
            <person name="Harkins R."/>
            <person name="Harris A."/>
            <person name="Strong C.M."/>
            <person name="Hou S."/>
            <person name="Tomlinson C."/>
            <person name="Dauphin-Kohlberg S."/>
            <person name="Kozlowicz-Reilly A."/>
            <person name="Leonard S."/>
            <person name="Rohlfing T."/>
            <person name="Rock S.M."/>
            <person name="Tin-Wollam A.-M."/>
            <person name="Abbott A."/>
            <person name="Minx P."/>
            <person name="Maupin R."/>
            <person name="Strowmatt C."/>
            <person name="Latreille P."/>
            <person name="Miller N."/>
            <person name="Johnson D."/>
            <person name="Murray J."/>
            <person name="Woessner J.P."/>
            <person name="Wendl M.C."/>
            <person name="Yang S.-P."/>
            <person name="Schultz B.R."/>
            <person name="Wallis J.W."/>
            <person name="Spieth J."/>
            <person name="Bieri T.A."/>
            <person name="Nelson J.O."/>
            <person name="Berkowicz N."/>
            <person name="Wohldmann P.E."/>
            <person name="Cook L.L."/>
            <person name="Hickenbotham M.T."/>
            <person name="Eldred J."/>
            <person name="Williams D."/>
            <person name="Bedell J.A."/>
            <person name="Mardis E.R."/>
            <person name="Clifton S.W."/>
            <person name="Chissoe S.L."/>
            <person name="Marra M.A."/>
            <person name="Raymond C."/>
            <person name="Haugen E."/>
            <person name="Gillett W."/>
            <person name="Zhou Y."/>
            <person name="James R."/>
            <person name="Phelps K."/>
            <person name="Iadanoto S."/>
            <person name="Bubb K."/>
            <person name="Simms E."/>
            <person name="Levy R."/>
            <person name="Clendenning J."/>
            <person name="Kaul R."/>
            <person name="Kent W.J."/>
            <person name="Furey T.S."/>
            <person name="Baertsch R.A."/>
            <person name="Brent M.R."/>
            <person name="Keibler E."/>
            <person name="Flicek P."/>
            <person name="Bork P."/>
            <person name="Suyama M."/>
            <person name="Bailey J.A."/>
            <person name="Portnoy M.E."/>
            <person name="Torrents D."/>
            <person name="Chinwalla A.T."/>
            <person name="Gish W.R."/>
            <person name="Eddy S.R."/>
            <person name="McPherson J.D."/>
            <person name="Olson M.V."/>
            <person name="Eichler E.E."/>
            <person name="Green E.D."/>
            <person name="Waterston R.H."/>
            <person name="Wilson R.K."/>
        </authorList>
    </citation>
    <scope>NUCLEOTIDE SEQUENCE [LARGE SCALE GENOMIC DNA] (ISOFORM A)</scope>
    <scope>VARIANT GLN-343</scope>
</reference>
<reference key="8">
    <citation type="journal article" date="2004" name="Genome Res.">
        <title>The status, quality, and expansion of the NIH full-length cDNA project: the Mammalian Gene Collection (MGC).</title>
        <authorList>
            <consortium name="The MGC Project Team"/>
        </authorList>
    </citation>
    <scope>NUCLEOTIDE SEQUENCE [LARGE SCALE MRNA] (ISOFORM A)</scope>
    <source>
        <tissue>Colon</tissue>
    </source>
</reference>
<accession>O00222</accession>
<accession>A4D0Y3</accession>
<accession>B0FZ74</accession>
<accession>B0M0L0</accession>
<accession>O15493</accession>
<accession>O95945</accession>
<accession>O95946</accession>
<accession>Q3MIV9</accession>
<accession>Q52M02</accession>
<accession>Q6J165</accession>